<organism>
    <name type="scientific">Caenorhabditis elegans</name>
    <dbReference type="NCBI Taxonomy" id="6239"/>
    <lineage>
        <taxon>Eukaryota</taxon>
        <taxon>Metazoa</taxon>
        <taxon>Ecdysozoa</taxon>
        <taxon>Nematoda</taxon>
        <taxon>Chromadorea</taxon>
        <taxon>Rhabditida</taxon>
        <taxon>Rhabditina</taxon>
        <taxon>Rhabditomorpha</taxon>
        <taxon>Rhabditoidea</taxon>
        <taxon>Rhabditidae</taxon>
        <taxon>Peloderinae</taxon>
        <taxon>Caenorhabditis</taxon>
    </lineage>
</organism>
<accession>Q9N4H4</accession>
<accession>Q8MZU4</accession>
<gene>
    <name evidence="13" type="primary">parp-1</name>
    <name evidence="11 13" type="synonym">pme-1</name>
    <name evidence="13" type="ORF">Y71F9AL.18</name>
</gene>
<sequence>MIHSNEPLPYAIEYAKSGRSNCKTCKKNIALDQLRMSMNRPSTFFDGNMDSWFHYNCFWIKMIRGRDDINISSIRGVDWLRWEDQEKLRQEIQHFKTASPPTLTPLCSTTTVILSTIKTEKSLSNRGKCGKCGQNFERGEIKAHNKGKANHFKCFLQEFDKISGTVEDIPGWADYEENFKIKAVGEYVEALAAKRRSTEPATPASASPTPPEAETPVLSAEGSPESSNKRPASSEIIEIDGEGNPDENDFAKKRRMKKEARLMEVQKKRMKKQSDLLWEYRQIFERMPYTDKISILRENEQDIPEGHDPTAQVIERLVDNALFGCPIICQTCSNGKIVYNSSCRTYVCTGYATEYSKCTYESKNPIRTPFEVSHRLTEKHKLQDIVFNQMSERLYIGEEDGESVVKIDKRKSKGGTRGEQFIYAAEAFDSTNNVPIKVGDLTSTNTHIIKKGTVVDAKFALADRCHVFKNEIDGSLYQATLSFTDLTQNKNSYYKIQLLKDDQRENYYVFRSWGRVGTEVGGNKHESYSNSNEAILKFQDVFHEKTKNDWIYRKHFRKMPGMFSYVETDYSEFAQITDTEITPGSKTLLPKSVKEVVMSIFDVENMKSALKSFEMDVNKMPLGRLSHNQINLAFEVLNDISDLLVKLPIDASRILDFSNKFYTIIPHNFGMRVPEPIDSFHKIKEKNNMLNALLDIKFAYDQISGGDVPASTSLGIDPVDINYQKLKCIMEPLQQGCDDWNMIHQYLKNTHGATHDLKVELIDILKLNRDNESSKFKRHIGNRRLLWHGSGKMNFAGILGQGLRIAPPEAPVSGYMFGKGVYFADMFSKSFFYCRANAKEEAYLLLCDVALGNVQQLMASKNVSRQTLPAGFQSVQGLGRQCPREIGSYNHPDGYTIPLGLTYMQLQGKQDVDYHLLYNEFIVYDVDQIQLKYLVRVKMHHARHL</sequence>
<proteinExistence type="evidence at protein level"/>
<feature type="chain" id="PRO_0000211335" description="Poly [ADP-ribose] polymerase 1">
    <location>
        <begin position="1"/>
        <end position="945"/>
    </location>
</feature>
<feature type="domain" description="PADR1 zinc-binding" evidence="6">
    <location>
        <begin position="258"/>
        <end position="397"/>
    </location>
</feature>
<feature type="domain" description="WGR" evidence="5">
    <location>
        <begin position="464"/>
        <end position="563"/>
    </location>
</feature>
<feature type="domain" description="PARP alpha-helical" evidence="4">
    <location>
        <begin position="586"/>
        <end position="704"/>
    </location>
</feature>
<feature type="domain" description="PARP catalytic" evidence="3">
    <location>
        <begin position="717"/>
        <end position="945"/>
    </location>
</feature>
<feature type="zinc finger region" description="PARP-type 1" evidence="2">
    <location>
        <begin position="10"/>
        <end position="96"/>
    </location>
</feature>
<feature type="zinc finger region" description="PARP-type 2; degenerate" evidence="2">
    <location>
        <begin position="117"/>
        <end position="183"/>
    </location>
</feature>
<feature type="region of interest" description="Disordered" evidence="7">
    <location>
        <begin position="195"/>
        <end position="251"/>
    </location>
</feature>
<feature type="region of interest" description="Zinc ribbon" evidence="6">
    <location>
        <begin position="324"/>
        <end position="369"/>
    </location>
</feature>
<feature type="compositionally biased region" description="Acidic residues" evidence="7">
    <location>
        <begin position="237"/>
        <end position="248"/>
    </location>
</feature>
<feature type="binding site" evidence="2">
    <location>
        <position position="22"/>
    </location>
    <ligand>
        <name>Zn(2+)</name>
        <dbReference type="ChEBI" id="CHEBI:29105"/>
        <label>1</label>
    </ligand>
</feature>
<feature type="binding site" evidence="2">
    <location>
        <position position="25"/>
    </location>
    <ligand>
        <name>Zn(2+)</name>
        <dbReference type="ChEBI" id="CHEBI:29105"/>
        <label>1</label>
    </ligand>
</feature>
<feature type="binding site" evidence="2">
    <location>
        <position position="54"/>
    </location>
    <ligand>
        <name>Zn(2+)</name>
        <dbReference type="ChEBI" id="CHEBI:29105"/>
        <label>1</label>
    </ligand>
</feature>
<feature type="binding site" evidence="2">
    <location>
        <position position="57"/>
    </location>
    <ligand>
        <name>Zn(2+)</name>
        <dbReference type="ChEBI" id="CHEBI:29105"/>
        <label>1</label>
    </ligand>
</feature>
<feature type="binding site" evidence="6">
    <location>
        <position position="329"/>
    </location>
    <ligand>
        <name>Zn(2+)</name>
        <dbReference type="ChEBI" id="CHEBI:29105"/>
        <label>2</label>
    </ligand>
</feature>
<feature type="binding site" evidence="6">
    <location>
        <position position="332"/>
    </location>
    <ligand>
        <name>Zn(2+)</name>
        <dbReference type="ChEBI" id="CHEBI:29105"/>
        <label>2</label>
    </ligand>
</feature>
<feature type="binding site" evidence="6">
    <location>
        <position position="348"/>
    </location>
    <ligand>
        <name>Zn(2+)</name>
        <dbReference type="ChEBI" id="CHEBI:29105"/>
        <label>2</label>
    </ligand>
</feature>
<feature type="binding site" evidence="6">
    <location>
        <position position="358"/>
    </location>
    <ligand>
        <name>Zn(2+)</name>
        <dbReference type="ChEBI" id="CHEBI:29105"/>
        <label>2</label>
    </ligand>
</feature>
<feature type="sequence conflict" description="In Ref. 1; AAM27195." evidence="12" ref="1">
    <original>FK</original>
    <variation>LN</variation>
    <location>
        <begin position="152"/>
        <end position="153"/>
    </location>
</feature>
<reference key="1">
    <citation type="journal article" date="2002" name="Biochem. J.">
        <title>The genes pme-1 and pme-2 encode two poly(ADP-ribose) polymerases in Caenorhabditis elegans.</title>
        <authorList>
            <person name="Gagnon S.N."/>
            <person name="Hengartner M.O."/>
            <person name="Desnoyers S."/>
        </authorList>
    </citation>
    <scope>NUCLEOTIDE SEQUENCE [MRNA]</scope>
    <scope>CATALYTIC ACTIVITY</scope>
    <scope>DEVELOPMENTAL STAGE</scope>
</reference>
<reference key="2">
    <citation type="journal article" date="1998" name="Science">
        <title>Genome sequence of the nematode C. elegans: a platform for investigating biology.</title>
        <authorList>
            <consortium name="The C. elegans sequencing consortium"/>
        </authorList>
    </citation>
    <scope>NUCLEOTIDE SEQUENCE [LARGE SCALE GENOMIC DNA]</scope>
    <source>
        <strain>Bristol N2</strain>
    </source>
</reference>
<reference key="3">
    <citation type="journal article" date="2003" name="Genes Dev.">
        <title>Identification of genes that protect the C. elegans genome against mutations by genome-wide RNAi.</title>
        <authorList>
            <person name="Pothof J."/>
            <person name="van Haaften G."/>
            <person name="Thijssen K."/>
            <person name="Kamath R.S."/>
            <person name="Fraser A.G."/>
            <person name="Ahringer J."/>
            <person name="Plasterk R.H.A."/>
            <person name="Tijsterman M."/>
        </authorList>
    </citation>
    <scope>FUNCTION</scope>
</reference>
<reference key="4">
    <citation type="journal article" date="2005" name="DNA Repair">
        <title>Ionizing radiations in Caenorhabditis elegans induce poly(ADP-ribosyl)ation, a conserved DNA-damage response essential for survival.</title>
        <authorList>
            <person name="Dequen F."/>
            <person name="Gagnon S.N."/>
            <person name="Desnoyers S."/>
        </authorList>
    </citation>
    <scope>FUNCTION</scope>
    <scope>CATALYTIC ACTIVITY</scope>
    <scope>ACTIVITY REGULATION</scope>
</reference>
<protein>
    <recommendedName>
        <fullName evidence="1">Poly [ADP-ribose] polymerase 1</fullName>
        <ecNumber evidence="3 8 10">2.4.2.30</ecNumber>
    </recommendedName>
    <alternativeName>
        <fullName>Poly ADP-ribose metabolism enzyme 1</fullName>
    </alternativeName>
    <alternativeName>
        <fullName evidence="12">Protein poly-ADP-ribosyltransferase parp-1</fullName>
        <ecNumber evidence="12">2.4.2.-</ecNumber>
    </alternativeName>
</protein>
<evidence type="ECO:0000250" key="1">
    <source>
        <dbReference type="UniProtKB" id="P09874"/>
    </source>
</evidence>
<evidence type="ECO:0000255" key="2">
    <source>
        <dbReference type="PROSITE-ProRule" id="PRU00264"/>
    </source>
</evidence>
<evidence type="ECO:0000255" key="3">
    <source>
        <dbReference type="PROSITE-ProRule" id="PRU00397"/>
    </source>
</evidence>
<evidence type="ECO:0000255" key="4">
    <source>
        <dbReference type="PROSITE-ProRule" id="PRU00398"/>
    </source>
</evidence>
<evidence type="ECO:0000255" key="5">
    <source>
        <dbReference type="PROSITE-ProRule" id="PRU01321"/>
    </source>
</evidence>
<evidence type="ECO:0000255" key="6">
    <source>
        <dbReference type="PROSITE-ProRule" id="PRU01351"/>
    </source>
</evidence>
<evidence type="ECO:0000256" key="7">
    <source>
        <dbReference type="SAM" id="MobiDB-lite"/>
    </source>
</evidence>
<evidence type="ECO:0000269" key="8">
    <source>
    </source>
</evidence>
<evidence type="ECO:0000269" key="9">
    <source>
    </source>
</evidence>
<evidence type="ECO:0000269" key="10">
    <source>
    </source>
</evidence>
<evidence type="ECO:0000303" key="11">
    <source>
    </source>
</evidence>
<evidence type="ECO:0000305" key="12"/>
<evidence type="ECO:0000312" key="13">
    <source>
        <dbReference type="WormBase" id="Y71F9AL.18a"/>
    </source>
</evidence>
<name>PARP1_CAEEL</name>
<dbReference type="EC" id="2.4.2.30" evidence="3 8 10"/>
<dbReference type="EC" id="2.4.2.-" evidence="12"/>
<dbReference type="EMBL" id="AF499444">
    <property type="protein sequence ID" value="AAM27195.1"/>
    <property type="molecule type" value="mRNA"/>
</dbReference>
<dbReference type="EMBL" id="BX284601">
    <property type="protein sequence ID" value="CCD73512.1"/>
    <property type="molecule type" value="Genomic_DNA"/>
</dbReference>
<dbReference type="RefSeq" id="NP_491072.1">
    <property type="nucleotide sequence ID" value="NM_058671.11"/>
</dbReference>
<dbReference type="SMR" id="Q9N4H4"/>
<dbReference type="BioGRID" id="57311">
    <property type="interactions" value="8"/>
</dbReference>
<dbReference type="FunCoup" id="Q9N4H4">
    <property type="interactions" value="1227"/>
</dbReference>
<dbReference type="STRING" id="6239.Y71F9AL.18a.1"/>
<dbReference type="PaxDb" id="6239-Y71F9AL.18"/>
<dbReference type="PeptideAtlas" id="Q9N4H4"/>
<dbReference type="EnsemblMetazoa" id="Y71F9AL.18a.1">
    <property type="protein sequence ID" value="Y71F9AL.18a.1"/>
    <property type="gene ID" value="WBGene00004049"/>
</dbReference>
<dbReference type="EnsemblMetazoa" id="Y71F9AL.18a.2">
    <property type="protein sequence ID" value="Y71F9AL.18a.2"/>
    <property type="gene ID" value="WBGene00004049"/>
</dbReference>
<dbReference type="GeneID" id="266823"/>
<dbReference type="KEGG" id="cel:CELE_Y71F9AL.18"/>
<dbReference type="UCSC" id="Y71F9AL.18.1">
    <property type="organism name" value="c. elegans"/>
</dbReference>
<dbReference type="AGR" id="WB:WBGene00004049"/>
<dbReference type="CTD" id="266823"/>
<dbReference type="WormBase" id="Y71F9AL.18a">
    <property type="protein sequence ID" value="CE25556"/>
    <property type="gene ID" value="WBGene00004049"/>
    <property type="gene designation" value="parp-1"/>
</dbReference>
<dbReference type="eggNOG" id="KOG1037">
    <property type="taxonomic scope" value="Eukaryota"/>
</dbReference>
<dbReference type="GeneTree" id="ENSGT00940000156058"/>
<dbReference type="HOGENOM" id="CLU_004841_0_1_1"/>
<dbReference type="InParanoid" id="Q9N4H4"/>
<dbReference type="OMA" id="THNEYVI"/>
<dbReference type="OrthoDB" id="429950at2759"/>
<dbReference type="PhylomeDB" id="Q9N4H4"/>
<dbReference type="Reactome" id="R-CEL-5696394">
    <property type="pathway name" value="DNA Damage Recognition in GG-NER"/>
</dbReference>
<dbReference type="Reactome" id="R-CEL-5696395">
    <property type="pathway name" value="Formation of Incision Complex in GG-NER"/>
</dbReference>
<dbReference type="Reactome" id="R-CEL-5696400">
    <property type="pathway name" value="Dual Incision in GG-NER"/>
</dbReference>
<dbReference type="PRO" id="PR:Q9N4H4"/>
<dbReference type="Proteomes" id="UP000001940">
    <property type="component" value="Chromosome I"/>
</dbReference>
<dbReference type="Bgee" id="WBGene00004049">
    <property type="expression patterns" value="Expressed in adult organism and 3 other cell types or tissues"/>
</dbReference>
<dbReference type="ExpressionAtlas" id="Q9N4H4">
    <property type="expression patterns" value="baseline and differential"/>
</dbReference>
<dbReference type="GO" id="GO:0005730">
    <property type="term" value="C:nucleolus"/>
    <property type="evidence" value="ECO:0000318"/>
    <property type="project" value="GO_Central"/>
</dbReference>
<dbReference type="GO" id="GO:0003677">
    <property type="term" value="F:DNA binding"/>
    <property type="evidence" value="ECO:0007669"/>
    <property type="project" value="UniProtKB-KW"/>
</dbReference>
<dbReference type="GO" id="GO:0051287">
    <property type="term" value="F:NAD binding"/>
    <property type="evidence" value="ECO:0007669"/>
    <property type="project" value="InterPro"/>
</dbReference>
<dbReference type="GO" id="GO:0003950">
    <property type="term" value="F:NAD+ poly-ADP-ribosyltransferase activity"/>
    <property type="evidence" value="ECO:0000314"/>
    <property type="project" value="WormBase"/>
</dbReference>
<dbReference type="GO" id="GO:0140806">
    <property type="term" value="F:NAD+-protein-aspartate ADP-ribosyltransferase activity"/>
    <property type="evidence" value="ECO:0007669"/>
    <property type="project" value="RHEA"/>
</dbReference>
<dbReference type="GO" id="GO:0140807">
    <property type="term" value="F:NAD+-protein-glutamate ADP-ribosyltransferase activity"/>
    <property type="evidence" value="ECO:0007669"/>
    <property type="project" value="RHEA"/>
</dbReference>
<dbReference type="GO" id="GO:0016779">
    <property type="term" value="F:nucleotidyltransferase activity"/>
    <property type="evidence" value="ECO:0007669"/>
    <property type="project" value="UniProtKB-KW"/>
</dbReference>
<dbReference type="GO" id="GO:0008270">
    <property type="term" value="F:zinc ion binding"/>
    <property type="evidence" value="ECO:0007669"/>
    <property type="project" value="UniProtKB-KW"/>
</dbReference>
<dbReference type="GO" id="GO:0008340">
    <property type="term" value="P:determination of adult lifespan"/>
    <property type="evidence" value="ECO:0000315"/>
    <property type="project" value="WormBase"/>
</dbReference>
<dbReference type="GO" id="GO:0006302">
    <property type="term" value="P:double-strand break repair"/>
    <property type="evidence" value="ECO:0000318"/>
    <property type="project" value="GO_Central"/>
</dbReference>
<dbReference type="CDD" id="cd01437">
    <property type="entry name" value="parp_like"/>
    <property type="match status" value="1"/>
</dbReference>
<dbReference type="CDD" id="cd08001">
    <property type="entry name" value="WGR_PARP1_like"/>
    <property type="match status" value="1"/>
</dbReference>
<dbReference type="FunFam" id="1.20.142.10:FF:000002">
    <property type="entry name" value="Poly [ADP-ribose] polymerase"/>
    <property type="match status" value="1"/>
</dbReference>
<dbReference type="FunFam" id="3.90.228.10:FF:000029">
    <property type="entry name" value="Poly [ADP-ribose] polymerase"/>
    <property type="match status" value="1"/>
</dbReference>
<dbReference type="Gene3D" id="1.10.20.130">
    <property type="match status" value="1"/>
</dbReference>
<dbReference type="Gene3D" id="2.20.25.630">
    <property type="match status" value="1"/>
</dbReference>
<dbReference type="Gene3D" id="3.90.228.10">
    <property type="match status" value="1"/>
</dbReference>
<dbReference type="Gene3D" id="1.20.142.10">
    <property type="entry name" value="Poly(ADP-ribose) polymerase, regulatory domain"/>
    <property type="match status" value="1"/>
</dbReference>
<dbReference type="Gene3D" id="3.30.1740.10">
    <property type="entry name" value="Zinc finger, PARP-type"/>
    <property type="match status" value="2"/>
</dbReference>
<dbReference type="InterPro" id="IPR050800">
    <property type="entry name" value="ARTD/PARP"/>
</dbReference>
<dbReference type="InterPro" id="IPR038650">
    <property type="entry name" value="PADR1_C_dom_sf"/>
</dbReference>
<dbReference type="InterPro" id="IPR008288">
    <property type="entry name" value="PARP"/>
</dbReference>
<dbReference type="InterPro" id="IPR049296">
    <property type="entry name" value="PARP1-like_PADR1_N"/>
</dbReference>
<dbReference type="InterPro" id="IPR012982">
    <property type="entry name" value="PARP1-like_PADR1_Zn_ribbon"/>
</dbReference>
<dbReference type="InterPro" id="IPR012317">
    <property type="entry name" value="Poly(ADP-ribose)pol_cat_dom"/>
</dbReference>
<dbReference type="InterPro" id="IPR004102">
    <property type="entry name" value="Poly(ADP-ribose)pol_reg_dom"/>
</dbReference>
<dbReference type="InterPro" id="IPR036616">
    <property type="entry name" value="Poly(ADP-ribose)pol_reg_dom_sf"/>
</dbReference>
<dbReference type="InterPro" id="IPR036930">
    <property type="entry name" value="WGR_dom_sf"/>
</dbReference>
<dbReference type="InterPro" id="IPR008893">
    <property type="entry name" value="WGR_domain"/>
</dbReference>
<dbReference type="InterPro" id="IPR001510">
    <property type="entry name" value="Znf_PARP"/>
</dbReference>
<dbReference type="InterPro" id="IPR036957">
    <property type="entry name" value="Znf_PARP_sf"/>
</dbReference>
<dbReference type="PANTHER" id="PTHR10459">
    <property type="entry name" value="DNA LIGASE"/>
    <property type="match status" value="1"/>
</dbReference>
<dbReference type="PANTHER" id="PTHR10459:SF60">
    <property type="entry name" value="POLY [ADP-RIBOSE] POLYMERASE 2"/>
    <property type="match status" value="1"/>
</dbReference>
<dbReference type="Pfam" id="PF21728">
    <property type="entry name" value="PADR1_N"/>
    <property type="match status" value="1"/>
</dbReference>
<dbReference type="Pfam" id="PF00644">
    <property type="entry name" value="PARP"/>
    <property type="match status" value="1"/>
</dbReference>
<dbReference type="Pfam" id="PF02877">
    <property type="entry name" value="PARP_reg"/>
    <property type="match status" value="1"/>
</dbReference>
<dbReference type="Pfam" id="PF05406">
    <property type="entry name" value="WGR"/>
    <property type="match status" value="1"/>
</dbReference>
<dbReference type="Pfam" id="PF00645">
    <property type="entry name" value="zf-PARP"/>
    <property type="match status" value="1"/>
</dbReference>
<dbReference type="Pfam" id="PF08063">
    <property type="entry name" value="Zn_ribbon_PADR1"/>
    <property type="match status" value="1"/>
</dbReference>
<dbReference type="PIRSF" id="PIRSF000489">
    <property type="entry name" value="NAD_ADPRT"/>
    <property type="match status" value="1"/>
</dbReference>
<dbReference type="SMART" id="SM01335">
    <property type="entry name" value="PADR1"/>
    <property type="match status" value="1"/>
</dbReference>
<dbReference type="SMART" id="SM00773">
    <property type="entry name" value="WGR"/>
    <property type="match status" value="1"/>
</dbReference>
<dbReference type="SMART" id="SM01336">
    <property type="entry name" value="zf-PARP"/>
    <property type="match status" value="2"/>
</dbReference>
<dbReference type="SUPFAM" id="SSF56399">
    <property type="entry name" value="ADP-ribosylation"/>
    <property type="match status" value="1"/>
</dbReference>
<dbReference type="SUPFAM" id="SSF47587">
    <property type="entry name" value="Domain of poly(ADP-ribose) polymerase"/>
    <property type="match status" value="1"/>
</dbReference>
<dbReference type="SUPFAM" id="SSF57716">
    <property type="entry name" value="Glucocorticoid receptor-like (DNA-binding domain)"/>
    <property type="match status" value="1"/>
</dbReference>
<dbReference type="SUPFAM" id="SSF142921">
    <property type="entry name" value="WGR domain-like"/>
    <property type="match status" value="1"/>
</dbReference>
<dbReference type="PROSITE" id="PS52007">
    <property type="entry name" value="PADR1"/>
    <property type="match status" value="1"/>
</dbReference>
<dbReference type="PROSITE" id="PS51060">
    <property type="entry name" value="PARP_ALPHA_HD"/>
    <property type="match status" value="1"/>
</dbReference>
<dbReference type="PROSITE" id="PS51059">
    <property type="entry name" value="PARP_CATALYTIC"/>
    <property type="match status" value="1"/>
</dbReference>
<dbReference type="PROSITE" id="PS51977">
    <property type="entry name" value="WGR"/>
    <property type="match status" value="1"/>
</dbReference>
<dbReference type="PROSITE" id="PS00347">
    <property type="entry name" value="ZF_PARP_1"/>
    <property type="match status" value="1"/>
</dbReference>
<dbReference type="PROSITE" id="PS50064">
    <property type="entry name" value="ZF_PARP_2"/>
    <property type="match status" value="1"/>
</dbReference>
<comment type="function">
    <text evidence="9 10">Poly[ADP-ribose] polymerase modifies various nuclear proteins by poly(ADP-ribosyl)ation, a post-translational modification synthesized after DNA damage that appears as an obligatory step in a detection/signaling pathway leading to the reparation of DNA strand breaks and programmed cell death (PubMed:15923155). Involved in protection of the genome against mutations (PubMed:12600937).</text>
</comment>
<comment type="catalytic activity">
    <reaction evidence="8 10">
        <text>NAD(+) + (ADP-D-ribosyl)n-acceptor = nicotinamide + (ADP-D-ribosyl)n+1-acceptor + H(+).</text>
        <dbReference type="EC" id="2.4.2.30"/>
    </reaction>
</comment>
<comment type="catalytic activity">
    <reaction evidence="12">
        <text>L-aspartyl-[protein] + NAD(+) = 4-O-(ADP-D-ribosyl)-L-aspartyl-[protein] + nicotinamide</text>
        <dbReference type="Rhea" id="RHEA:54424"/>
        <dbReference type="Rhea" id="RHEA-COMP:9867"/>
        <dbReference type="Rhea" id="RHEA-COMP:13832"/>
        <dbReference type="ChEBI" id="CHEBI:17154"/>
        <dbReference type="ChEBI" id="CHEBI:29961"/>
        <dbReference type="ChEBI" id="CHEBI:57540"/>
        <dbReference type="ChEBI" id="CHEBI:138102"/>
    </reaction>
    <physiologicalReaction direction="left-to-right" evidence="12">
        <dbReference type="Rhea" id="RHEA:54425"/>
    </physiologicalReaction>
</comment>
<comment type="catalytic activity">
    <reaction evidence="12">
        <text>L-glutamyl-[protein] + NAD(+) = 5-O-(ADP-D-ribosyl)-L-glutamyl-[protein] + nicotinamide</text>
        <dbReference type="Rhea" id="RHEA:58224"/>
        <dbReference type="Rhea" id="RHEA-COMP:10208"/>
        <dbReference type="Rhea" id="RHEA-COMP:15089"/>
        <dbReference type="ChEBI" id="CHEBI:17154"/>
        <dbReference type="ChEBI" id="CHEBI:29973"/>
        <dbReference type="ChEBI" id="CHEBI:57540"/>
        <dbReference type="ChEBI" id="CHEBI:142540"/>
    </reaction>
    <physiologicalReaction direction="left-to-right" evidence="12">
        <dbReference type="Rhea" id="RHEA:58225"/>
    </physiologicalReaction>
</comment>
<comment type="activity regulation">
    <text evidence="10">Inhibited by N-(6-oxo-5,6-dihydrophenanthridin-2-yl)-N,N-dimethylacetamide HCl (PJ34), 1,5-dihydroxyisoquinoline (DHQ) and 3-aminobenzamide (3AB).</text>
</comment>
<comment type="subcellular location">
    <subcellularLocation>
        <location evidence="3">Nucleus</location>
    </subcellularLocation>
</comment>
<comment type="developmental stage">
    <text evidence="8">Predominantly expressed at early embryonic stages and later in L4 and adult stages.</text>
</comment>
<comment type="similarity">
    <text evidence="6 12">Belongs to the ARTD/PARP family.</text>
</comment>
<keyword id="KW-0013">ADP-ribosylation</keyword>
<keyword id="KW-0227">DNA damage</keyword>
<keyword id="KW-0234">DNA repair</keyword>
<keyword id="KW-0238">DNA-binding</keyword>
<keyword id="KW-0328">Glycosyltransferase</keyword>
<keyword id="KW-0479">Metal-binding</keyword>
<keyword id="KW-0520">NAD</keyword>
<keyword id="KW-0548">Nucleotidyltransferase</keyword>
<keyword id="KW-0539">Nucleus</keyword>
<keyword id="KW-1185">Reference proteome</keyword>
<keyword id="KW-0677">Repeat</keyword>
<keyword id="KW-0808">Transferase</keyword>
<keyword id="KW-0862">Zinc</keyword>
<keyword id="KW-0863">Zinc-finger</keyword>